<gene>
    <name evidence="1" type="primary">aroK</name>
    <name type="ordered locus">SSPA3128</name>
</gene>
<proteinExistence type="inferred from homology"/>
<comment type="function">
    <text evidence="1">Catalyzes the specific phosphorylation of the 3-hydroxyl group of shikimic acid using ATP as a cosubstrate.</text>
</comment>
<comment type="catalytic activity">
    <reaction evidence="1">
        <text>shikimate + ATP = 3-phosphoshikimate + ADP + H(+)</text>
        <dbReference type="Rhea" id="RHEA:13121"/>
        <dbReference type="ChEBI" id="CHEBI:15378"/>
        <dbReference type="ChEBI" id="CHEBI:30616"/>
        <dbReference type="ChEBI" id="CHEBI:36208"/>
        <dbReference type="ChEBI" id="CHEBI:145989"/>
        <dbReference type="ChEBI" id="CHEBI:456216"/>
        <dbReference type="EC" id="2.7.1.71"/>
    </reaction>
</comment>
<comment type="cofactor">
    <cofactor evidence="1">
        <name>Mg(2+)</name>
        <dbReference type="ChEBI" id="CHEBI:18420"/>
    </cofactor>
    <text evidence="1">Binds 1 Mg(2+) ion per subunit.</text>
</comment>
<comment type="pathway">
    <text evidence="1">Metabolic intermediate biosynthesis; chorismate biosynthesis; chorismate from D-erythrose 4-phosphate and phosphoenolpyruvate: step 5/7.</text>
</comment>
<comment type="subunit">
    <text evidence="1">Monomer.</text>
</comment>
<comment type="subcellular location">
    <subcellularLocation>
        <location evidence="1">Cytoplasm</location>
    </subcellularLocation>
</comment>
<comment type="similarity">
    <text evidence="1">Belongs to the shikimate kinase family.</text>
</comment>
<accession>B5BH30</accession>
<reference key="1">
    <citation type="journal article" date="2009" name="BMC Genomics">
        <title>Pseudogene accumulation in the evolutionary histories of Salmonella enterica serovars Paratyphi A and Typhi.</title>
        <authorList>
            <person name="Holt K.E."/>
            <person name="Thomson N.R."/>
            <person name="Wain J."/>
            <person name="Langridge G.C."/>
            <person name="Hasan R."/>
            <person name="Bhutta Z.A."/>
            <person name="Quail M.A."/>
            <person name="Norbertczak H."/>
            <person name="Walker D."/>
            <person name="Simmonds M."/>
            <person name="White B."/>
            <person name="Bason N."/>
            <person name="Mungall K."/>
            <person name="Dougan G."/>
            <person name="Parkhill J."/>
        </authorList>
    </citation>
    <scope>NUCLEOTIDE SEQUENCE [LARGE SCALE GENOMIC DNA]</scope>
    <source>
        <strain>AKU_12601</strain>
    </source>
</reference>
<organism>
    <name type="scientific">Salmonella paratyphi A (strain AKU_12601)</name>
    <dbReference type="NCBI Taxonomy" id="554290"/>
    <lineage>
        <taxon>Bacteria</taxon>
        <taxon>Pseudomonadati</taxon>
        <taxon>Pseudomonadota</taxon>
        <taxon>Gammaproteobacteria</taxon>
        <taxon>Enterobacterales</taxon>
        <taxon>Enterobacteriaceae</taxon>
        <taxon>Salmonella</taxon>
    </lineage>
</organism>
<evidence type="ECO:0000255" key="1">
    <source>
        <dbReference type="HAMAP-Rule" id="MF_00109"/>
    </source>
</evidence>
<dbReference type="EC" id="2.7.1.71" evidence="1"/>
<dbReference type="EMBL" id="FM200053">
    <property type="protein sequence ID" value="CAR61382.1"/>
    <property type="molecule type" value="Genomic_DNA"/>
</dbReference>
<dbReference type="RefSeq" id="WP_000818621.1">
    <property type="nucleotide sequence ID" value="NC_011147.1"/>
</dbReference>
<dbReference type="SMR" id="B5BH30"/>
<dbReference type="GeneID" id="66757820"/>
<dbReference type="KEGG" id="sek:SSPA3128"/>
<dbReference type="HOGENOM" id="CLU_057607_2_2_6"/>
<dbReference type="UniPathway" id="UPA00053">
    <property type="reaction ID" value="UER00088"/>
</dbReference>
<dbReference type="Proteomes" id="UP000001869">
    <property type="component" value="Chromosome"/>
</dbReference>
<dbReference type="GO" id="GO:0005829">
    <property type="term" value="C:cytosol"/>
    <property type="evidence" value="ECO:0007669"/>
    <property type="project" value="TreeGrafter"/>
</dbReference>
<dbReference type="GO" id="GO:0005524">
    <property type="term" value="F:ATP binding"/>
    <property type="evidence" value="ECO:0007669"/>
    <property type="project" value="UniProtKB-UniRule"/>
</dbReference>
<dbReference type="GO" id="GO:0000287">
    <property type="term" value="F:magnesium ion binding"/>
    <property type="evidence" value="ECO:0007669"/>
    <property type="project" value="UniProtKB-UniRule"/>
</dbReference>
<dbReference type="GO" id="GO:0004765">
    <property type="term" value="F:shikimate kinase activity"/>
    <property type="evidence" value="ECO:0007669"/>
    <property type="project" value="UniProtKB-UniRule"/>
</dbReference>
<dbReference type="GO" id="GO:0008652">
    <property type="term" value="P:amino acid biosynthetic process"/>
    <property type="evidence" value="ECO:0007669"/>
    <property type="project" value="UniProtKB-KW"/>
</dbReference>
<dbReference type="GO" id="GO:0009073">
    <property type="term" value="P:aromatic amino acid family biosynthetic process"/>
    <property type="evidence" value="ECO:0007669"/>
    <property type="project" value="UniProtKB-KW"/>
</dbReference>
<dbReference type="GO" id="GO:0009423">
    <property type="term" value="P:chorismate biosynthetic process"/>
    <property type="evidence" value="ECO:0007669"/>
    <property type="project" value="UniProtKB-UniRule"/>
</dbReference>
<dbReference type="CDD" id="cd00464">
    <property type="entry name" value="SK"/>
    <property type="match status" value="1"/>
</dbReference>
<dbReference type="FunFam" id="3.40.50.300:FF:000099">
    <property type="entry name" value="Shikimate kinase 1"/>
    <property type="match status" value="1"/>
</dbReference>
<dbReference type="Gene3D" id="3.40.50.300">
    <property type="entry name" value="P-loop containing nucleotide triphosphate hydrolases"/>
    <property type="match status" value="1"/>
</dbReference>
<dbReference type="HAMAP" id="MF_00109">
    <property type="entry name" value="Shikimate_kinase"/>
    <property type="match status" value="1"/>
</dbReference>
<dbReference type="InterPro" id="IPR027417">
    <property type="entry name" value="P-loop_NTPase"/>
</dbReference>
<dbReference type="InterPro" id="IPR031322">
    <property type="entry name" value="Shikimate/glucono_kinase"/>
</dbReference>
<dbReference type="InterPro" id="IPR000623">
    <property type="entry name" value="Shikimate_kinase/TSH1"/>
</dbReference>
<dbReference type="InterPro" id="IPR023000">
    <property type="entry name" value="Shikimate_kinase_CS"/>
</dbReference>
<dbReference type="NCBIfam" id="NF003456">
    <property type="entry name" value="PRK05057.1"/>
    <property type="match status" value="1"/>
</dbReference>
<dbReference type="PANTHER" id="PTHR21087">
    <property type="entry name" value="SHIKIMATE KINASE"/>
    <property type="match status" value="1"/>
</dbReference>
<dbReference type="PANTHER" id="PTHR21087:SF16">
    <property type="entry name" value="SHIKIMATE KINASE 1, CHLOROPLASTIC"/>
    <property type="match status" value="1"/>
</dbReference>
<dbReference type="Pfam" id="PF01202">
    <property type="entry name" value="SKI"/>
    <property type="match status" value="1"/>
</dbReference>
<dbReference type="PRINTS" id="PR01100">
    <property type="entry name" value="SHIKIMTKNASE"/>
</dbReference>
<dbReference type="SUPFAM" id="SSF52540">
    <property type="entry name" value="P-loop containing nucleoside triphosphate hydrolases"/>
    <property type="match status" value="1"/>
</dbReference>
<dbReference type="PROSITE" id="PS01128">
    <property type="entry name" value="SHIKIMATE_KINASE"/>
    <property type="match status" value="1"/>
</dbReference>
<feature type="chain" id="PRO_1000094410" description="Shikimate kinase 1">
    <location>
        <begin position="1"/>
        <end position="173"/>
    </location>
</feature>
<feature type="binding site" evidence="1">
    <location>
        <begin position="14"/>
        <end position="19"/>
    </location>
    <ligand>
        <name>ATP</name>
        <dbReference type="ChEBI" id="CHEBI:30616"/>
    </ligand>
</feature>
<feature type="binding site" evidence="1">
    <location>
        <position position="18"/>
    </location>
    <ligand>
        <name>Mg(2+)</name>
        <dbReference type="ChEBI" id="CHEBI:18420"/>
    </ligand>
</feature>
<feature type="binding site" evidence="1">
    <location>
        <position position="36"/>
    </location>
    <ligand>
        <name>substrate</name>
    </ligand>
</feature>
<feature type="binding site" evidence="1">
    <location>
        <position position="60"/>
    </location>
    <ligand>
        <name>substrate</name>
    </ligand>
</feature>
<feature type="binding site" evidence="1">
    <location>
        <position position="82"/>
    </location>
    <ligand>
        <name>substrate</name>
    </ligand>
</feature>
<feature type="binding site" evidence="1">
    <location>
        <position position="120"/>
    </location>
    <ligand>
        <name>ATP</name>
        <dbReference type="ChEBI" id="CHEBI:30616"/>
    </ligand>
</feature>
<feature type="binding site" evidence="1">
    <location>
        <position position="140"/>
    </location>
    <ligand>
        <name>substrate</name>
    </ligand>
</feature>
<feature type="binding site" evidence="1">
    <location>
        <position position="157"/>
    </location>
    <ligand>
        <name>ATP</name>
        <dbReference type="ChEBI" id="CHEBI:30616"/>
    </ligand>
</feature>
<name>AROK_SALPK</name>
<keyword id="KW-0028">Amino-acid biosynthesis</keyword>
<keyword id="KW-0057">Aromatic amino acid biosynthesis</keyword>
<keyword id="KW-0067">ATP-binding</keyword>
<keyword id="KW-0963">Cytoplasm</keyword>
<keyword id="KW-0418">Kinase</keyword>
<keyword id="KW-0460">Magnesium</keyword>
<keyword id="KW-0479">Metal-binding</keyword>
<keyword id="KW-0547">Nucleotide-binding</keyword>
<keyword id="KW-0808">Transferase</keyword>
<sequence>MAEKRNIFLVGPMGAGKSTIGRQLAQQLNMEFYDSDQEIEKRTGADVGWVFDVEGEDGFRNREEKVINELTEKQGIVLATGGGSVKSRETRNRLSARGVVVYLETTIEKQLARTQRDKKRPLLQVEAPPREVLEALANERNPLYEEIADVTIRTDDQSAKVVANQIIHMLESN</sequence>
<protein>
    <recommendedName>
        <fullName evidence="1">Shikimate kinase 1</fullName>
        <shortName evidence="1">SK 1</shortName>
        <ecNumber evidence="1">2.7.1.71</ecNumber>
    </recommendedName>
</protein>